<protein>
    <recommendedName>
        <fullName evidence="1">Large ribosomal subunit protein uL16c</fullName>
    </recommendedName>
    <alternativeName>
        <fullName evidence="2">50S ribosomal protein L16, chloroplastic</fullName>
    </alternativeName>
</protein>
<dbReference type="EMBL" id="EF067920">
    <property type="protein sequence ID" value="ABK20684.1"/>
    <property type="molecule type" value="Genomic_DNA"/>
</dbReference>
<dbReference type="RefSeq" id="YP_874461.1">
    <property type="nucleotide sequence ID" value="NC_008588.1"/>
</dbReference>
<dbReference type="SMR" id="A0T0I6"/>
<dbReference type="FunCoup" id="A0T0I6">
    <property type="interactions" value="6"/>
</dbReference>
<dbReference type="STRING" id="556484.A0T0I6"/>
<dbReference type="GeneID" id="4524663"/>
<dbReference type="InParanoid" id="A0T0I6"/>
<dbReference type="Proteomes" id="UP000000759">
    <property type="component" value="Chloroplast"/>
</dbReference>
<dbReference type="GO" id="GO:0009507">
    <property type="term" value="C:chloroplast"/>
    <property type="evidence" value="ECO:0007669"/>
    <property type="project" value="UniProtKB-SubCell"/>
</dbReference>
<dbReference type="GO" id="GO:0005762">
    <property type="term" value="C:mitochondrial large ribosomal subunit"/>
    <property type="evidence" value="ECO:0007669"/>
    <property type="project" value="TreeGrafter"/>
</dbReference>
<dbReference type="GO" id="GO:0019843">
    <property type="term" value="F:rRNA binding"/>
    <property type="evidence" value="ECO:0007669"/>
    <property type="project" value="InterPro"/>
</dbReference>
<dbReference type="GO" id="GO:0003735">
    <property type="term" value="F:structural constituent of ribosome"/>
    <property type="evidence" value="ECO:0007669"/>
    <property type="project" value="InterPro"/>
</dbReference>
<dbReference type="GO" id="GO:0032543">
    <property type="term" value="P:mitochondrial translation"/>
    <property type="evidence" value="ECO:0007669"/>
    <property type="project" value="TreeGrafter"/>
</dbReference>
<dbReference type="CDD" id="cd01433">
    <property type="entry name" value="Ribosomal_L16_L10e"/>
    <property type="match status" value="1"/>
</dbReference>
<dbReference type="FunFam" id="3.90.1170.10:FF:000001">
    <property type="entry name" value="50S ribosomal protein L16"/>
    <property type="match status" value="1"/>
</dbReference>
<dbReference type="Gene3D" id="3.90.1170.10">
    <property type="entry name" value="Ribosomal protein L10e/L16"/>
    <property type="match status" value="1"/>
</dbReference>
<dbReference type="HAMAP" id="MF_01342">
    <property type="entry name" value="Ribosomal_uL16"/>
    <property type="match status" value="1"/>
</dbReference>
<dbReference type="InterPro" id="IPR047873">
    <property type="entry name" value="Ribosomal_uL16"/>
</dbReference>
<dbReference type="InterPro" id="IPR000114">
    <property type="entry name" value="Ribosomal_uL16_bact-type"/>
</dbReference>
<dbReference type="InterPro" id="IPR020798">
    <property type="entry name" value="Ribosomal_uL16_CS"/>
</dbReference>
<dbReference type="InterPro" id="IPR016180">
    <property type="entry name" value="Ribosomal_uL16_dom"/>
</dbReference>
<dbReference type="InterPro" id="IPR036920">
    <property type="entry name" value="Ribosomal_uL16_sf"/>
</dbReference>
<dbReference type="NCBIfam" id="TIGR01164">
    <property type="entry name" value="rplP_bact"/>
    <property type="match status" value="1"/>
</dbReference>
<dbReference type="PANTHER" id="PTHR12220">
    <property type="entry name" value="50S/60S RIBOSOMAL PROTEIN L16"/>
    <property type="match status" value="1"/>
</dbReference>
<dbReference type="PANTHER" id="PTHR12220:SF13">
    <property type="entry name" value="LARGE RIBOSOMAL SUBUNIT PROTEIN UL16M"/>
    <property type="match status" value="1"/>
</dbReference>
<dbReference type="Pfam" id="PF00252">
    <property type="entry name" value="Ribosomal_L16"/>
    <property type="match status" value="1"/>
</dbReference>
<dbReference type="PRINTS" id="PR00060">
    <property type="entry name" value="RIBOSOMALL16"/>
</dbReference>
<dbReference type="SUPFAM" id="SSF54686">
    <property type="entry name" value="Ribosomal protein L16p/L10e"/>
    <property type="match status" value="1"/>
</dbReference>
<dbReference type="PROSITE" id="PS00586">
    <property type="entry name" value="RIBOSOMAL_L16_1"/>
    <property type="match status" value="1"/>
</dbReference>
<dbReference type="PROSITE" id="PS00701">
    <property type="entry name" value="RIBOSOMAL_L16_2"/>
    <property type="match status" value="1"/>
</dbReference>
<reference key="1">
    <citation type="journal article" date="2007" name="Mol. Genet. Genomics">
        <title>Chloroplast genomes of the diatoms Phaeodactylum tricornutum and Thalassiosira pseudonana: comparison with other plastid genomes of the red lineage.</title>
        <authorList>
            <person name="Oudot-Le Secq M.-P."/>
            <person name="Grimwood J."/>
            <person name="Shapiro H."/>
            <person name="Armbrust E.V."/>
            <person name="Bowler C."/>
            <person name="Green B.R."/>
        </authorList>
    </citation>
    <scope>NUCLEOTIDE SEQUENCE [LARGE SCALE GENOMIC DNA]</scope>
    <source>
        <strain>CCAP 1055/1</strain>
    </source>
</reference>
<name>RK16_PHATC</name>
<organism>
    <name type="scientific">Phaeodactylum tricornutum (strain CCAP 1055/1)</name>
    <dbReference type="NCBI Taxonomy" id="556484"/>
    <lineage>
        <taxon>Eukaryota</taxon>
        <taxon>Sar</taxon>
        <taxon>Stramenopiles</taxon>
        <taxon>Ochrophyta</taxon>
        <taxon>Bacillariophyta</taxon>
        <taxon>Bacillariophyceae</taxon>
        <taxon>Bacillariophycidae</taxon>
        <taxon>Naviculales</taxon>
        <taxon>Phaeodactylaceae</taxon>
        <taxon>Phaeodactylum</taxon>
    </lineage>
</organism>
<evidence type="ECO:0000255" key="1">
    <source>
        <dbReference type="HAMAP-Rule" id="MF_01342"/>
    </source>
</evidence>
<evidence type="ECO:0000305" key="2"/>
<geneLocation type="chloroplast"/>
<gene>
    <name evidence="1" type="primary">rpl16</name>
</gene>
<feature type="chain" id="PRO_0000276391" description="Large ribosomal subunit protein uL16c">
    <location>
        <begin position="1"/>
        <end position="138"/>
    </location>
</feature>
<keyword id="KW-0150">Chloroplast</keyword>
<keyword id="KW-0934">Plastid</keyword>
<keyword id="KW-1185">Reference proteome</keyword>
<keyword id="KW-0687">Ribonucleoprotein</keyword>
<keyword id="KW-0689">Ribosomal protein</keyword>
<accession>A0T0I6</accession>
<sequence>MLSPKRTKYRKYHRGRMRGAKTRGNEICFGNFGLQALEPTWITSRQIEAARRTITRYTKRGAKLWIRIFPDKTVTARAAESRMGSGKGAVDYWVAVVKPGTIIFEIGSVPEEIAKTALNLAAYKLPIKTKFIIKDNIS</sequence>
<comment type="subunit">
    <text evidence="1">Part of the 50S ribosomal subunit.</text>
</comment>
<comment type="subcellular location">
    <subcellularLocation>
        <location>Plastid</location>
        <location>Chloroplast</location>
    </subcellularLocation>
</comment>
<comment type="similarity">
    <text evidence="1">Belongs to the universal ribosomal protein uL16 family.</text>
</comment>
<proteinExistence type="inferred from homology"/>